<dbReference type="EMBL" id="AC007583">
    <property type="protein sequence ID" value="AAF75079.1"/>
    <property type="molecule type" value="Genomic_DNA"/>
</dbReference>
<dbReference type="EMBL" id="CP002684">
    <property type="protein sequence ID" value="AEE28171.1"/>
    <property type="molecule type" value="Genomic_DNA"/>
</dbReference>
<dbReference type="EMBL" id="AY042798">
    <property type="protein sequence ID" value="AAK68738.1"/>
    <property type="molecule type" value="mRNA"/>
</dbReference>
<dbReference type="EMBL" id="BT008759">
    <property type="protein sequence ID" value="AAP49521.1"/>
    <property type="molecule type" value="mRNA"/>
</dbReference>
<dbReference type="EMBL" id="AK176347">
    <property type="protein sequence ID" value="BAD44110.1"/>
    <property type="molecule type" value="mRNA"/>
</dbReference>
<dbReference type="PIR" id="G86212">
    <property type="entry name" value="G86212"/>
</dbReference>
<dbReference type="RefSeq" id="NP_172253.1">
    <property type="nucleotide sequence ID" value="NM_100648.2"/>
</dbReference>
<dbReference type="SMR" id="Q9LQQ1"/>
<dbReference type="BioGRID" id="22529">
    <property type="interactions" value="2"/>
</dbReference>
<dbReference type="FunCoup" id="Q9LQQ1">
    <property type="interactions" value="4"/>
</dbReference>
<dbReference type="IntAct" id="Q9LQQ1">
    <property type="interactions" value="2"/>
</dbReference>
<dbReference type="iPTMnet" id="Q9LQQ1"/>
<dbReference type="PaxDb" id="3702-AT1G07740.1"/>
<dbReference type="ProteomicsDB" id="226369"/>
<dbReference type="EnsemblPlants" id="AT1G07740.1">
    <property type="protein sequence ID" value="AT1G07740.1"/>
    <property type="gene ID" value="AT1G07740"/>
</dbReference>
<dbReference type="GeneID" id="837288"/>
<dbReference type="Gramene" id="AT1G07740.1">
    <property type="protein sequence ID" value="AT1G07740.1"/>
    <property type="gene ID" value="AT1G07740"/>
</dbReference>
<dbReference type="KEGG" id="ath:AT1G07740"/>
<dbReference type="Araport" id="AT1G07740"/>
<dbReference type="TAIR" id="AT1G07740"/>
<dbReference type="eggNOG" id="KOG4197">
    <property type="taxonomic scope" value="Eukaryota"/>
</dbReference>
<dbReference type="HOGENOM" id="CLU_002706_49_0_1"/>
<dbReference type="InParanoid" id="Q9LQQ1"/>
<dbReference type="OMA" id="CKPRLVN"/>
<dbReference type="OrthoDB" id="185373at2759"/>
<dbReference type="PhylomeDB" id="Q9LQQ1"/>
<dbReference type="PRO" id="PR:Q9LQQ1"/>
<dbReference type="Proteomes" id="UP000006548">
    <property type="component" value="Chromosome 1"/>
</dbReference>
<dbReference type="ExpressionAtlas" id="Q9LQQ1">
    <property type="expression patterns" value="baseline and differential"/>
</dbReference>
<dbReference type="GO" id="GO:0005739">
    <property type="term" value="C:mitochondrion"/>
    <property type="evidence" value="ECO:0007669"/>
    <property type="project" value="UniProtKB-SubCell"/>
</dbReference>
<dbReference type="Gene3D" id="1.25.40.10">
    <property type="entry name" value="Tetratricopeptide repeat domain"/>
    <property type="match status" value="4"/>
</dbReference>
<dbReference type="InterPro" id="IPR002885">
    <property type="entry name" value="Pentatricopeptide_rpt"/>
</dbReference>
<dbReference type="InterPro" id="IPR011990">
    <property type="entry name" value="TPR-like_helical_dom_sf"/>
</dbReference>
<dbReference type="NCBIfam" id="TIGR00756">
    <property type="entry name" value="PPR"/>
    <property type="match status" value="8"/>
</dbReference>
<dbReference type="PANTHER" id="PTHR47932">
    <property type="entry name" value="ATPASE EXPRESSION PROTEIN 3"/>
    <property type="match status" value="1"/>
</dbReference>
<dbReference type="PANTHER" id="PTHR47932:SF63">
    <property type="entry name" value="OS08G0290000 PROTEIN"/>
    <property type="match status" value="1"/>
</dbReference>
<dbReference type="Pfam" id="PF01535">
    <property type="entry name" value="PPR"/>
    <property type="match status" value="3"/>
</dbReference>
<dbReference type="Pfam" id="PF13041">
    <property type="entry name" value="PPR_2"/>
    <property type="match status" value="3"/>
</dbReference>
<dbReference type="SUPFAM" id="SSF81901">
    <property type="entry name" value="HCP-like"/>
    <property type="match status" value="1"/>
</dbReference>
<dbReference type="PROSITE" id="PS51375">
    <property type="entry name" value="PPR"/>
    <property type="match status" value="10"/>
</dbReference>
<reference key="1">
    <citation type="journal article" date="2000" name="Nature">
        <title>Sequence and analysis of chromosome 1 of the plant Arabidopsis thaliana.</title>
        <authorList>
            <person name="Theologis A."/>
            <person name="Ecker J.R."/>
            <person name="Palm C.J."/>
            <person name="Federspiel N.A."/>
            <person name="Kaul S."/>
            <person name="White O."/>
            <person name="Alonso J."/>
            <person name="Altafi H."/>
            <person name="Araujo R."/>
            <person name="Bowman C.L."/>
            <person name="Brooks S.Y."/>
            <person name="Buehler E."/>
            <person name="Chan A."/>
            <person name="Chao Q."/>
            <person name="Chen H."/>
            <person name="Cheuk R.F."/>
            <person name="Chin C.W."/>
            <person name="Chung M.K."/>
            <person name="Conn L."/>
            <person name="Conway A.B."/>
            <person name="Conway A.R."/>
            <person name="Creasy T.H."/>
            <person name="Dewar K."/>
            <person name="Dunn P."/>
            <person name="Etgu P."/>
            <person name="Feldblyum T.V."/>
            <person name="Feng J.-D."/>
            <person name="Fong B."/>
            <person name="Fujii C.Y."/>
            <person name="Gill J.E."/>
            <person name="Goldsmith A.D."/>
            <person name="Haas B."/>
            <person name="Hansen N.F."/>
            <person name="Hughes B."/>
            <person name="Huizar L."/>
            <person name="Hunter J.L."/>
            <person name="Jenkins J."/>
            <person name="Johnson-Hopson C."/>
            <person name="Khan S."/>
            <person name="Khaykin E."/>
            <person name="Kim C.J."/>
            <person name="Koo H.L."/>
            <person name="Kremenetskaia I."/>
            <person name="Kurtz D.B."/>
            <person name="Kwan A."/>
            <person name="Lam B."/>
            <person name="Langin-Hooper S."/>
            <person name="Lee A."/>
            <person name="Lee J.M."/>
            <person name="Lenz C.A."/>
            <person name="Li J.H."/>
            <person name="Li Y.-P."/>
            <person name="Lin X."/>
            <person name="Liu S.X."/>
            <person name="Liu Z.A."/>
            <person name="Luros J.S."/>
            <person name="Maiti R."/>
            <person name="Marziali A."/>
            <person name="Militscher J."/>
            <person name="Miranda M."/>
            <person name="Nguyen M."/>
            <person name="Nierman W.C."/>
            <person name="Osborne B.I."/>
            <person name="Pai G."/>
            <person name="Peterson J."/>
            <person name="Pham P.K."/>
            <person name="Rizzo M."/>
            <person name="Rooney T."/>
            <person name="Rowley D."/>
            <person name="Sakano H."/>
            <person name="Salzberg S.L."/>
            <person name="Schwartz J.R."/>
            <person name="Shinn P."/>
            <person name="Southwick A.M."/>
            <person name="Sun H."/>
            <person name="Tallon L.J."/>
            <person name="Tambunga G."/>
            <person name="Toriumi M.J."/>
            <person name="Town C.D."/>
            <person name="Utterback T."/>
            <person name="Van Aken S."/>
            <person name="Vaysberg M."/>
            <person name="Vysotskaia V.S."/>
            <person name="Walker M."/>
            <person name="Wu D."/>
            <person name="Yu G."/>
            <person name="Fraser C.M."/>
            <person name="Venter J.C."/>
            <person name="Davis R.W."/>
        </authorList>
    </citation>
    <scope>NUCLEOTIDE SEQUENCE [LARGE SCALE GENOMIC DNA]</scope>
    <source>
        <strain>cv. Columbia</strain>
    </source>
</reference>
<reference key="2">
    <citation type="journal article" date="2017" name="Plant J.">
        <title>Araport11: a complete reannotation of the Arabidopsis thaliana reference genome.</title>
        <authorList>
            <person name="Cheng C.Y."/>
            <person name="Krishnakumar V."/>
            <person name="Chan A.P."/>
            <person name="Thibaud-Nissen F."/>
            <person name="Schobel S."/>
            <person name="Town C.D."/>
        </authorList>
    </citation>
    <scope>GENOME REANNOTATION</scope>
    <source>
        <strain>cv. Columbia</strain>
    </source>
</reference>
<reference key="3">
    <citation type="journal article" date="2003" name="Science">
        <title>Empirical analysis of transcriptional activity in the Arabidopsis genome.</title>
        <authorList>
            <person name="Yamada K."/>
            <person name="Lim J."/>
            <person name="Dale J.M."/>
            <person name="Chen H."/>
            <person name="Shinn P."/>
            <person name="Palm C.J."/>
            <person name="Southwick A.M."/>
            <person name="Wu H.C."/>
            <person name="Kim C.J."/>
            <person name="Nguyen M."/>
            <person name="Pham P.K."/>
            <person name="Cheuk R.F."/>
            <person name="Karlin-Newmann G."/>
            <person name="Liu S.X."/>
            <person name="Lam B."/>
            <person name="Sakano H."/>
            <person name="Wu T."/>
            <person name="Yu G."/>
            <person name="Miranda M."/>
            <person name="Quach H.L."/>
            <person name="Tripp M."/>
            <person name="Chang C.H."/>
            <person name="Lee J.M."/>
            <person name="Toriumi M.J."/>
            <person name="Chan M.M."/>
            <person name="Tang C.C."/>
            <person name="Onodera C.S."/>
            <person name="Deng J.M."/>
            <person name="Akiyama K."/>
            <person name="Ansari Y."/>
            <person name="Arakawa T."/>
            <person name="Banh J."/>
            <person name="Banno F."/>
            <person name="Bowser L."/>
            <person name="Brooks S.Y."/>
            <person name="Carninci P."/>
            <person name="Chao Q."/>
            <person name="Choy N."/>
            <person name="Enju A."/>
            <person name="Goldsmith A.D."/>
            <person name="Gurjal M."/>
            <person name="Hansen N.F."/>
            <person name="Hayashizaki Y."/>
            <person name="Johnson-Hopson C."/>
            <person name="Hsuan V.W."/>
            <person name="Iida K."/>
            <person name="Karnes M."/>
            <person name="Khan S."/>
            <person name="Koesema E."/>
            <person name="Ishida J."/>
            <person name="Jiang P.X."/>
            <person name="Jones T."/>
            <person name="Kawai J."/>
            <person name="Kamiya A."/>
            <person name="Meyers C."/>
            <person name="Nakajima M."/>
            <person name="Narusaka M."/>
            <person name="Seki M."/>
            <person name="Sakurai T."/>
            <person name="Satou M."/>
            <person name="Tamse R."/>
            <person name="Vaysberg M."/>
            <person name="Wallender E.K."/>
            <person name="Wong C."/>
            <person name="Yamamura Y."/>
            <person name="Yuan S."/>
            <person name="Shinozaki K."/>
            <person name="Davis R.W."/>
            <person name="Theologis A."/>
            <person name="Ecker J.R."/>
        </authorList>
    </citation>
    <scope>NUCLEOTIDE SEQUENCE [LARGE SCALE MRNA]</scope>
    <source>
        <strain>cv. Columbia</strain>
    </source>
</reference>
<reference key="4">
    <citation type="submission" date="2004-09" db="EMBL/GenBank/DDBJ databases">
        <title>Large-scale analysis of RIKEN Arabidopsis full-length (RAFL) cDNAs.</title>
        <authorList>
            <person name="Totoki Y."/>
            <person name="Seki M."/>
            <person name="Ishida J."/>
            <person name="Nakajima M."/>
            <person name="Enju A."/>
            <person name="Kamiya A."/>
            <person name="Narusaka M."/>
            <person name="Shin-i T."/>
            <person name="Nakagawa M."/>
            <person name="Sakamoto N."/>
            <person name="Oishi K."/>
            <person name="Kohara Y."/>
            <person name="Kobayashi M."/>
            <person name="Toyoda A."/>
            <person name="Sakaki Y."/>
            <person name="Sakurai T."/>
            <person name="Iida K."/>
            <person name="Akiyama K."/>
            <person name="Satou M."/>
            <person name="Toyoda T."/>
            <person name="Konagaya A."/>
            <person name="Carninci P."/>
            <person name="Kawai J."/>
            <person name="Hayashizaki Y."/>
            <person name="Shinozaki K."/>
        </authorList>
    </citation>
    <scope>NUCLEOTIDE SEQUENCE [LARGE SCALE MRNA]</scope>
    <source>
        <strain>cv. Columbia</strain>
    </source>
</reference>
<reference key="5">
    <citation type="journal article" date="2004" name="Plant Cell">
        <title>Genome-wide analysis of Arabidopsis pentatricopeptide repeat proteins reveals their essential role in organelle biogenesis.</title>
        <authorList>
            <person name="Lurin C."/>
            <person name="Andres C."/>
            <person name="Aubourg S."/>
            <person name="Bellaoui M."/>
            <person name="Bitton F."/>
            <person name="Bruyere C."/>
            <person name="Caboche M."/>
            <person name="Debast C."/>
            <person name="Gualberto J."/>
            <person name="Hoffmann B."/>
            <person name="Lecharny A."/>
            <person name="Le Ret M."/>
            <person name="Martin-Magniette M.-L."/>
            <person name="Mireau H."/>
            <person name="Peeters N."/>
            <person name="Renou J.-P."/>
            <person name="Szurek B."/>
            <person name="Taconnat L."/>
            <person name="Small I."/>
        </authorList>
    </citation>
    <scope>GENE FAMILY</scope>
</reference>
<name>PPR20_ARATH</name>
<evidence type="ECO:0000255" key="1"/>
<evidence type="ECO:0000256" key="2">
    <source>
        <dbReference type="SAM" id="MobiDB-lite"/>
    </source>
</evidence>
<evidence type="ECO:0000305" key="3"/>
<organism>
    <name type="scientific">Arabidopsis thaliana</name>
    <name type="common">Mouse-ear cress</name>
    <dbReference type="NCBI Taxonomy" id="3702"/>
    <lineage>
        <taxon>Eukaryota</taxon>
        <taxon>Viridiplantae</taxon>
        <taxon>Streptophyta</taxon>
        <taxon>Embryophyta</taxon>
        <taxon>Tracheophyta</taxon>
        <taxon>Spermatophyta</taxon>
        <taxon>Magnoliopsida</taxon>
        <taxon>eudicotyledons</taxon>
        <taxon>Gunneridae</taxon>
        <taxon>Pentapetalae</taxon>
        <taxon>rosids</taxon>
        <taxon>malvids</taxon>
        <taxon>Brassicales</taxon>
        <taxon>Brassicaceae</taxon>
        <taxon>Camelineae</taxon>
        <taxon>Arabidopsis</taxon>
    </lineage>
</organism>
<gene>
    <name type="ordered locus">At1g07740</name>
    <name type="ORF">F24B9.15</name>
</gene>
<sequence>MRRRLSSVLINNQCIASQRHYHTSRPEKPTKKASSHEPTHKFTRKPWEEVPFLTDLKEIEDPEEALSLFHQYQEMGFRHDYPSYSSLIYKLAKSRNFDAVDQILRLVRYRNVRCRESLFMGLIQHYGKAGSVDKAIDVFHKITSFDCVRTIQSLNTLINVLVDNGELEKAKSFFDGAKDMRLRPNSVSFNILIKGFLDKCDWEAACKVFDEMLEMEVQPSVVTYNSLIGFLCRNDDMGKAKSLLEDMIKKRIRPNAVTFGLLMKGLCCKGEYNEAKKLMFDMEYRGCKPGLVNYGILMSDLGKRGRIDEAKLLLGEMKKRRIKPDVVIYNILVNHLCTECRVPEAYRVLTEMQMKGCKPNAATYRMMIDGFCRIEDFDSGLNVLNAMLASRHCPTPATFVCMVAGLIKGGNLDHACFVLEVMGKKNLSFGSGAWQNLLSDLCIKDGGVYCEALSEVISI</sequence>
<comment type="subcellular location">
    <subcellularLocation>
        <location evidence="3">Mitochondrion</location>
    </subcellularLocation>
</comment>
<comment type="similarity">
    <text evidence="3">Belongs to the PPR family. P subfamily.</text>
</comment>
<comment type="online information" name="Pentatricopeptide repeat proteins">
    <link uri="https://ppr.plantenergy.uwa.edu.au"/>
</comment>
<keyword id="KW-0496">Mitochondrion</keyword>
<keyword id="KW-1185">Reference proteome</keyword>
<keyword id="KW-0677">Repeat</keyword>
<keyword id="KW-0809">Transit peptide</keyword>
<protein>
    <recommendedName>
        <fullName>Pentatricopeptide repeat-containing protein At1g07740, mitochondrial</fullName>
    </recommendedName>
</protein>
<accession>Q9LQQ1</accession>
<proteinExistence type="evidence at transcript level"/>
<feature type="transit peptide" description="Mitochondrion" evidence="1">
    <location>
        <begin position="1"/>
        <end position="20"/>
    </location>
</feature>
<feature type="chain" id="PRO_0000342761" description="Pentatricopeptide repeat-containing protein At1g07740, mitochondrial">
    <location>
        <begin position="21"/>
        <end position="459"/>
    </location>
</feature>
<feature type="repeat" description="PPR 1">
    <location>
        <begin position="80"/>
        <end position="114"/>
    </location>
</feature>
<feature type="repeat" description="PPR 2">
    <location>
        <begin position="115"/>
        <end position="149"/>
    </location>
</feature>
<feature type="repeat" description="PPR 3">
    <location>
        <begin position="150"/>
        <end position="184"/>
    </location>
</feature>
<feature type="repeat" description="PPR 4">
    <location>
        <begin position="185"/>
        <end position="219"/>
    </location>
</feature>
<feature type="repeat" description="PPR 5">
    <location>
        <begin position="220"/>
        <end position="254"/>
    </location>
</feature>
<feature type="repeat" description="PPR 6">
    <location>
        <begin position="255"/>
        <end position="289"/>
    </location>
</feature>
<feature type="repeat" description="PPR 7">
    <location>
        <begin position="290"/>
        <end position="324"/>
    </location>
</feature>
<feature type="repeat" description="PPR 8">
    <location>
        <begin position="325"/>
        <end position="359"/>
    </location>
</feature>
<feature type="repeat" description="PPR 9">
    <location>
        <begin position="360"/>
        <end position="394"/>
    </location>
</feature>
<feature type="repeat" description="PPR 10">
    <location>
        <begin position="395"/>
        <end position="429"/>
    </location>
</feature>
<feature type="region of interest" description="Disordered" evidence="2">
    <location>
        <begin position="19"/>
        <end position="41"/>
    </location>
</feature>
<feature type="compositionally biased region" description="Basic and acidic residues" evidence="2">
    <location>
        <begin position="24"/>
        <end position="41"/>
    </location>
</feature>